<accession>Q8RUW5</accession>
<accession>O64809</accession>
<accession>Q3EBV9</accession>
<accession>Q9ASY4</accession>
<organism>
    <name type="scientific">Arabidopsis thaliana</name>
    <name type="common">Mouse-ear cress</name>
    <dbReference type="NCBI Taxonomy" id="3702"/>
    <lineage>
        <taxon>Eukaryota</taxon>
        <taxon>Viridiplantae</taxon>
        <taxon>Streptophyta</taxon>
        <taxon>Embryophyta</taxon>
        <taxon>Tracheophyta</taxon>
        <taxon>Spermatophyta</taxon>
        <taxon>Magnoliopsida</taxon>
        <taxon>eudicotyledons</taxon>
        <taxon>Gunneridae</taxon>
        <taxon>Pentapetalae</taxon>
        <taxon>rosids</taxon>
        <taxon>malvids</taxon>
        <taxon>Brassicales</taxon>
        <taxon>Brassicaceae</taxon>
        <taxon>Camelineae</taxon>
        <taxon>Arabidopsis</taxon>
    </lineage>
</organism>
<gene>
    <name evidence="12" type="primary">SCPL8</name>
    <name evidence="11" type="synonym">SMT</name>
    <name evidence="10" type="synonym">SNG1</name>
    <name evidence="18" type="ordered locus">At2g22990</name>
    <name evidence="19" type="ORF">F21P24.5</name>
    <name evidence="20" type="ORF">T20K9.18</name>
</gene>
<sequence length="433" mass="49439">MSLKIKFLLLLVLYHHVDSASIVKFLPGFEGPLPFELETGYIGIGEDENVQFFYYFIKSENNPKEDPLLIWLNGGPGCSCLGGIIFENGPVGLKFEVFNGSAPSLFSTTYSWTKMANIIFLDQPVGSGFSYSKTPIDKTGDISEVKRTHEFLQKWLSRHPQYFSNPLYVVGDSYSGMIVPALVQEISQGNYICCEPPINLQGYMLGNPVTYMDFEQNFRIPYAYGMGLISDEIYEPMKRICNGNYYNVDPSNTQCLKLTEEYHKCTAKINIHHILTPDCDVTNVTSPDCYYYPYHLIECWANDESVREALHIEKGSKGKWARCNRTIPYNHDIVSSIPYHMNNSISGYRSLIYSGDHDIAVPFLATQAWIRSLNYSPIHNWRPWMINNQIAGYTRAYSNKMTFATIKGGGHTAEYRPNETFIMFQRWISGQPL</sequence>
<evidence type="ECO:0000250" key="1">
    <source>
        <dbReference type="UniProtKB" id="P00729"/>
    </source>
</evidence>
<evidence type="ECO:0000255" key="2">
    <source>
        <dbReference type="PROSITE-ProRule" id="PRU00498"/>
    </source>
</evidence>
<evidence type="ECO:0000269" key="3">
    <source>
    </source>
</evidence>
<evidence type="ECO:0000269" key="4">
    <source>
    </source>
</evidence>
<evidence type="ECO:0000269" key="5">
    <source>
    </source>
</evidence>
<evidence type="ECO:0000269" key="6">
    <source>
    </source>
</evidence>
<evidence type="ECO:0000269" key="7">
    <source>
    </source>
</evidence>
<evidence type="ECO:0000269" key="8">
    <source>
    </source>
</evidence>
<evidence type="ECO:0000269" key="9">
    <source>
    </source>
</evidence>
<evidence type="ECO:0000303" key="10">
    <source>
    </source>
</evidence>
<evidence type="ECO:0000303" key="11">
    <source>
    </source>
</evidence>
<evidence type="ECO:0000303" key="12">
    <source>
    </source>
</evidence>
<evidence type="ECO:0000303" key="13">
    <source>
    </source>
</evidence>
<evidence type="ECO:0000305" key="14"/>
<evidence type="ECO:0000305" key="15">
    <source>
    </source>
</evidence>
<evidence type="ECO:0000305" key="16">
    <source>
    </source>
</evidence>
<evidence type="ECO:0000305" key="17">
    <source>
    </source>
</evidence>
<evidence type="ECO:0000312" key="18">
    <source>
        <dbReference type="Araport" id="AT2G22990"/>
    </source>
</evidence>
<evidence type="ECO:0000312" key="19">
    <source>
        <dbReference type="EMBL" id="AAC17816.2"/>
    </source>
</evidence>
<evidence type="ECO:0000312" key="20">
    <source>
        <dbReference type="EMBL" id="AAM15006.1"/>
    </source>
</evidence>
<feature type="signal peptide" evidence="3 4">
    <location>
        <begin position="1"/>
        <end position="19"/>
    </location>
</feature>
<feature type="chain" id="PRO_0000274622" description="Serine carboxypeptidase-like 8">
    <location>
        <begin position="20"/>
        <end position="433"/>
    </location>
</feature>
<feature type="active site" evidence="1">
    <location>
        <position position="173"/>
    </location>
</feature>
<feature type="active site" evidence="1">
    <location>
        <position position="358"/>
    </location>
</feature>
<feature type="active site" evidence="1">
    <location>
        <position position="411"/>
    </location>
</feature>
<feature type="glycosylation site" description="N-linked (GlcNAc...) asparagine" evidence="2">
    <location>
        <position position="99"/>
    </location>
</feature>
<feature type="glycosylation site" description="N-linked (GlcNAc...) asparagine" evidence="2">
    <location>
        <position position="283"/>
    </location>
</feature>
<feature type="glycosylation site" description="N-linked (GlcNAc...) asparagine" evidence="2">
    <location>
        <position position="324"/>
    </location>
</feature>
<feature type="glycosylation site" description="N-linked (GlcNAc...) asparagine" evidence="2">
    <location>
        <position position="342"/>
    </location>
</feature>
<feature type="glycosylation site" description="N-linked (GlcNAc...) asparagine" evidence="2">
    <location>
        <position position="418"/>
    </location>
</feature>
<feature type="disulfide bond" evidence="1">
    <location>
        <begin position="78"/>
        <end position="323"/>
    </location>
</feature>
<feature type="disulfide bond" evidence="1">
    <location>
        <begin position="241"/>
        <end position="255"/>
    </location>
</feature>
<feature type="disulfide bond" evidence="1">
    <location>
        <begin position="279"/>
        <end position="289"/>
    </location>
</feature>
<feature type="splice variant" id="VSP_027464" description="In isoform 2." evidence="14">
    <original>GGGHTAEYRPNETFIMFQRWISGQPL</original>
    <variation>ASVDTRQSIDQTRPLSCSKGGSVANPCNKRLMTFTYNYLPTNIHVKRSCLC</variation>
    <location>
        <begin position="408"/>
        <end position="433"/>
    </location>
</feature>
<feature type="mutagenesis site" description="87% reduction of activity." evidence="6">
    <original>N</original>
    <variation>A</variation>
    <location>
        <position position="73"/>
    </location>
</feature>
<feature type="mutagenesis site" description="85% reduction of activity." evidence="6">
    <original>DSYS</original>
    <variation>ESYA</variation>
    <location>
        <begin position="172"/>
        <end position="175"/>
    </location>
</feature>
<feature type="mutagenesis site" description="Total loss of activity." evidence="6">
    <original>S</original>
    <variation>A</variation>
    <location>
        <position position="173"/>
    </location>
</feature>
<feature type="mutagenesis site" description="25% reduction of activity." evidence="6">
    <original>K</original>
    <variation>E</variation>
    <location>
        <position position="268"/>
    </location>
</feature>
<feature type="mutagenesis site" description="78% reduction of activity." evidence="6">
    <original>H</original>
    <variation>D</variation>
    <location>
        <position position="272"/>
    </location>
</feature>
<feature type="mutagenesis site" description="99% reduction of activity." evidence="6">
    <original>R</original>
    <variation>E</variation>
    <location>
        <position position="322"/>
    </location>
</feature>
<feature type="mutagenesis site" description="80% reduction of activity." evidence="6">
    <original>D</original>
    <variation>A</variation>
    <location>
        <position position="358"/>
    </location>
</feature>
<feature type="mutagenesis site" description="Total loss of activity." evidence="6">
    <original>H</original>
    <variation>A</variation>
    <location>
        <position position="411"/>
    </location>
</feature>
<reference key="1">
    <citation type="journal article" date="2000" name="Plant Cell">
        <title>Cloning of the SNG1 gene of Arabidopsis reveals a role for a serine carboxypeptidase-like protein as an acyltransferase in secondary metabolism.</title>
        <authorList>
            <person name="Lehfeldt C."/>
            <person name="Shirley A.M."/>
            <person name="Meyer K."/>
            <person name="Ruegger M.O."/>
            <person name="Cusumano J.C."/>
            <person name="Viitanen P.V."/>
            <person name="Strack D."/>
            <person name="Chapple C."/>
        </authorList>
    </citation>
    <scope>NUCLEOTIDE SEQUENCE [MRNA]</scope>
    <scope>PROTEIN SEQUENCE OF 20-36</scope>
    <scope>FUNCTION</scope>
    <scope>DISRUPTION PHENOTYPE</scope>
    <scope>CATALYTIC ACTIVITY</scope>
    <scope>ACTIVITY REGULATION</scope>
    <scope>TISSUE SPECIFICITY</scope>
    <source>
        <strain>cv. Columbia</strain>
        <tissue>Seedling</tissue>
    </source>
</reference>
<reference key="2">
    <citation type="journal article" date="1999" name="Nature">
        <title>Sequence and analysis of chromosome 2 of the plant Arabidopsis thaliana.</title>
        <authorList>
            <person name="Lin X."/>
            <person name="Kaul S."/>
            <person name="Rounsley S.D."/>
            <person name="Shea T.P."/>
            <person name="Benito M.-I."/>
            <person name="Town C.D."/>
            <person name="Fujii C.Y."/>
            <person name="Mason T.M."/>
            <person name="Bowman C.L."/>
            <person name="Barnstead M.E."/>
            <person name="Feldblyum T.V."/>
            <person name="Buell C.R."/>
            <person name="Ketchum K.A."/>
            <person name="Lee J.J."/>
            <person name="Ronning C.M."/>
            <person name="Koo H.L."/>
            <person name="Moffat K.S."/>
            <person name="Cronin L.A."/>
            <person name="Shen M."/>
            <person name="Pai G."/>
            <person name="Van Aken S."/>
            <person name="Umayam L."/>
            <person name="Tallon L.J."/>
            <person name="Gill J.E."/>
            <person name="Adams M.D."/>
            <person name="Carrera A.J."/>
            <person name="Creasy T.H."/>
            <person name="Goodman H.M."/>
            <person name="Somerville C.R."/>
            <person name="Copenhaver G.P."/>
            <person name="Preuss D."/>
            <person name="Nierman W.C."/>
            <person name="White O."/>
            <person name="Eisen J.A."/>
            <person name="Salzberg S.L."/>
            <person name="Fraser C.M."/>
            <person name="Venter J.C."/>
        </authorList>
    </citation>
    <scope>NUCLEOTIDE SEQUENCE [LARGE SCALE GENOMIC DNA]</scope>
    <source>
        <strain>cv. Columbia</strain>
    </source>
</reference>
<reference key="3">
    <citation type="journal article" date="2017" name="Plant J.">
        <title>Araport11: a complete reannotation of the Arabidopsis thaliana reference genome.</title>
        <authorList>
            <person name="Cheng C.Y."/>
            <person name="Krishnakumar V."/>
            <person name="Chan A.P."/>
            <person name="Thibaud-Nissen F."/>
            <person name="Schobel S."/>
            <person name="Town C.D."/>
        </authorList>
    </citation>
    <scope>GENOME REANNOTATION</scope>
    <source>
        <strain>cv. Columbia</strain>
    </source>
</reference>
<reference key="4">
    <citation type="journal article" date="2003" name="Science">
        <title>Empirical analysis of transcriptional activity in the Arabidopsis genome.</title>
        <authorList>
            <person name="Yamada K."/>
            <person name="Lim J."/>
            <person name="Dale J.M."/>
            <person name="Chen H."/>
            <person name="Shinn P."/>
            <person name="Palm C.J."/>
            <person name="Southwick A.M."/>
            <person name="Wu H.C."/>
            <person name="Kim C.J."/>
            <person name="Nguyen M."/>
            <person name="Pham P.K."/>
            <person name="Cheuk R.F."/>
            <person name="Karlin-Newmann G."/>
            <person name="Liu S.X."/>
            <person name="Lam B."/>
            <person name="Sakano H."/>
            <person name="Wu T."/>
            <person name="Yu G."/>
            <person name="Miranda M."/>
            <person name="Quach H.L."/>
            <person name="Tripp M."/>
            <person name="Chang C.H."/>
            <person name="Lee J.M."/>
            <person name="Toriumi M.J."/>
            <person name="Chan M.M."/>
            <person name="Tang C.C."/>
            <person name="Onodera C.S."/>
            <person name="Deng J.M."/>
            <person name="Akiyama K."/>
            <person name="Ansari Y."/>
            <person name="Arakawa T."/>
            <person name="Banh J."/>
            <person name="Banno F."/>
            <person name="Bowser L."/>
            <person name="Brooks S.Y."/>
            <person name="Carninci P."/>
            <person name="Chao Q."/>
            <person name="Choy N."/>
            <person name="Enju A."/>
            <person name="Goldsmith A.D."/>
            <person name="Gurjal M."/>
            <person name="Hansen N.F."/>
            <person name="Hayashizaki Y."/>
            <person name="Johnson-Hopson C."/>
            <person name="Hsuan V.W."/>
            <person name="Iida K."/>
            <person name="Karnes M."/>
            <person name="Khan S."/>
            <person name="Koesema E."/>
            <person name="Ishida J."/>
            <person name="Jiang P.X."/>
            <person name="Jones T."/>
            <person name="Kawai J."/>
            <person name="Kamiya A."/>
            <person name="Meyers C."/>
            <person name="Nakajima M."/>
            <person name="Narusaka M."/>
            <person name="Seki M."/>
            <person name="Sakurai T."/>
            <person name="Satou M."/>
            <person name="Tamse R."/>
            <person name="Vaysberg M."/>
            <person name="Wallender E.K."/>
            <person name="Wong C."/>
            <person name="Yamamura Y."/>
            <person name="Yuan S."/>
            <person name="Shinozaki K."/>
            <person name="Davis R.W."/>
            <person name="Theologis A."/>
            <person name="Ecker J.R."/>
        </authorList>
    </citation>
    <scope>NUCLEOTIDE SEQUENCE [LARGE SCALE MRNA]</scope>
    <source>
        <strain>cv. Columbia</strain>
    </source>
</reference>
<reference key="5">
    <citation type="journal article" date="2002" name="Planta">
        <title>Immunolocalization of 1- O-sinapoylglucose:malate sinapoyltransferase in Arabidopsis thaliana.</title>
        <authorList>
            <person name="Hause B."/>
            <person name="Meyer K."/>
            <person name="Viitanen P.V."/>
            <person name="Chapple C."/>
            <person name="Strack D."/>
        </authorList>
    </citation>
    <scope>PROTEIN SEQUENCE OF 20-25</scope>
    <scope>TISSUE SPECIFICITY</scope>
    <scope>SUBCELLULAR LOCATION</scope>
    <scope>GLYCOSYLATION</scope>
</reference>
<reference key="6">
    <citation type="journal article" date="2005" name="Plant Physiol.">
        <title>An expression and bioinformatics analysis of the Arabidopsis serine carboxypeptidase-like gene family.</title>
        <authorList>
            <person name="Fraser C.M."/>
            <person name="Rider L.W."/>
            <person name="Chapple C."/>
        </authorList>
    </citation>
    <scope>GENE FAMILY</scope>
    <scope>TISSUE SPECIFICITY</scope>
    <scope>NOMENCLATURE</scope>
</reference>
<reference key="7">
    <citation type="journal article" date="2006" name="FEBS Lett.">
        <title>Structure determinants and substrate recognition of serine carboxypeptidase-like acyltransferases from plant secondary metabolism.</title>
        <authorList>
            <person name="Stehle F."/>
            <person name="Brandt W."/>
            <person name="Milkowski C."/>
            <person name="Strack D."/>
        </authorList>
    </citation>
    <scope>FUNCTION</scope>
    <scope>3D-STRUCTURE MODELING</scope>
    <scope>MUTAGENESIS OF ASN-73; 172-ASP--SER-175; SER-173; LYS-268; HIS-272; ARG-322; ASP-358 AND HIS-411</scope>
    <scope>ACTIVITY REGULATION</scope>
</reference>
<reference key="8">
    <citation type="journal article" date="2007" name="Plant Physiol.">
        <title>Related Arabidopsis serine carboxypeptidase-like sinapoylglucose acyltransferases display distinct but overlapping substrate specificities.</title>
        <authorList>
            <person name="Fraser C.M."/>
            <person name="Thompson M.G."/>
            <person name="Shirley A.M."/>
            <person name="Ralph J."/>
            <person name="Schoenherr J.A."/>
            <person name="Sinlapadech T."/>
            <person name="Hall M.C."/>
            <person name="Chapple C."/>
        </authorList>
    </citation>
    <scope>FUNCTION</scope>
    <scope>DISRUPTION PHENOTYPE</scope>
    <scope>CATALYTIC ACTIVITY</scope>
    <source>
        <strain>cv. Columbia</strain>
    </source>
</reference>
<reference key="9">
    <citation type="journal article" date="2009" name="Phytochemistry">
        <title>Sinapoyltransferases in the light of molecular evolution.</title>
        <authorList>
            <person name="Stehle F."/>
            <person name="Brandt W."/>
            <person name="Stubbs M.T."/>
            <person name="Milkowski C."/>
            <person name="Strack D."/>
        </authorList>
    </citation>
    <scope>FUNCTION</scope>
</reference>
<reference key="10">
    <citation type="journal article" date="2010" name="Mol. Plant">
        <title>The ARABIDOPSIS accession Pna-10 is a naturally occurring sng1 deletion mutant.</title>
        <authorList>
            <person name="Li X."/>
            <person name="Bergelson J."/>
            <person name="Chapple C."/>
        </authorList>
    </citation>
    <scope>FUNCTION</scope>
    <scope>DISRUPTION PHENOTYPE</scope>
    <scope>CATALYTIC ACTIVITY</scope>
    <source>
        <strain>cv. Columbia</strain>
        <strain>cv. Pna-10</strain>
        <strain>cv. Pna-17</strain>
    </source>
</reference>
<proteinExistence type="evidence at protein level"/>
<comment type="function">
    <text evidence="3 6 7 8 9">Involved in plants secondary metabolism. Functions as acyltransferase to form the sinapate ester sinapoylmalate. Also capable of catalyzing the formation of 1,2-bis-O-sinapoyl beta-D-glucoside.</text>
</comment>
<comment type="catalytic activity">
    <reaction evidence="3 7 9">
        <text>1-O-(trans-sinapoyl)-beta-D-glucose + (S)-malate = sinapoyl (S)-malate + D-glucose</text>
        <dbReference type="Rhea" id="RHEA:12625"/>
        <dbReference type="ChEBI" id="CHEBI:4167"/>
        <dbReference type="ChEBI" id="CHEBI:15589"/>
        <dbReference type="ChEBI" id="CHEBI:16546"/>
        <dbReference type="ChEBI" id="CHEBI:57426"/>
        <dbReference type="EC" id="2.3.1.92"/>
    </reaction>
    <physiologicalReaction direction="left-to-right" evidence="3 7 9">
        <dbReference type="Rhea" id="RHEA:12626"/>
    </physiologicalReaction>
</comment>
<comment type="catalytic activity">
    <reaction evidence="3 7 9">
        <text>2 1-O-(trans-sinapoyl)-beta-D-glucose = 1,2-di-O-sinapoyl beta-D-glucose + D-glucose</text>
        <dbReference type="Rhea" id="RHEA:22664"/>
        <dbReference type="ChEBI" id="CHEBI:4167"/>
        <dbReference type="ChEBI" id="CHEBI:16546"/>
        <dbReference type="ChEBI" id="CHEBI:27993"/>
        <dbReference type="EC" id="2.3.1.103"/>
    </reaction>
    <physiologicalReaction direction="left-to-right" evidence="3 7 9">
        <dbReference type="Rhea" id="RHEA:22665"/>
    </physiologicalReaction>
</comment>
<comment type="activity regulation">
    <text evidence="3 6">95% inhibition by diisopropyl fluorophosphate (DFP) and 30% by phenylmethylsulfonyl fluoride (PMSF).</text>
</comment>
<comment type="subcellular location">
    <subcellularLocation>
        <location evidence="4">Vacuole</location>
    </subcellularLocation>
</comment>
<comment type="alternative products">
    <event type="alternative splicing"/>
    <isoform>
        <id>Q8RUW5-1</id>
        <name>1</name>
        <sequence type="displayed"/>
    </isoform>
    <isoform>
        <id>Q8RUW5-2</id>
        <name>2</name>
        <sequence type="described" ref="VSP_027464"/>
    </isoform>
</comment>
<comment type="tissue specificity">
    <text evidence="3 4 5">Highly expressed in seedlings. Expressed in leaves, stems, flowers and siliques, and at low levels in roots.</text>
</comment>
<comment type="PTM">
    <text evidence="4">N-glycosylated.</text>
</comment>
<comment type="disruption phenotype">
    <text evidence="3 7 9">Plants do not contain sinapoylmalate and accumulate its biosynthetic precursor, sinapoylglucose.</text>
</comment>
<comment type="miscellaneous">
    <text evidence="17">In cv. Pna-10, this protein SCP8 and the adjacent SCP10 are not present due to a natural 13-kb deletion (PubMed:19969522).</text>
</comment>
<comment type="miscellaneous">
    <molecule>Isoform 2</molecule>
    <text evidence="14">May be due to a competing donor splice site.</text>
</comment>
<comment type="similarity">
    <text evidence="14">Belongs to the peptidase S10 family.</text>
</comment>
<comment type="caution">
    <text evidence="15 16">Was classified as a serine carboxypeptidase-like (SCPL) protein solely on the basis of the overall sequence similarity (PubMed:15908604) but it has been shown that it belongs to a class of enzymes that catalyze acyltransferase reactions (PubMed:17600138).</text>
</comment>
<comment type="sequence caution" evidence="14">
    <conflict type="erroneous gene model prediction">
        <sequence resource="EMBL-CDS" id="AAC17816"/>
    </conflict>
</comment>
<comment type="sequence caution" evidence="14">
    <conflict type="frameshift">
        <sequence resource="EMBL-CDS" id="AAK32769"/>
    </conflict>
</comment>
<comment type="sequence caution" evidence="14">
    <conflict type="erroneous gene model prediction">
        <sequence resource="EMBL-CDS" id="AAM15006"/>
    </conflict>
</comment>
<comment type="sequence caution" evidence="14">
    <conflict type="erroneous termination">
        <sequence resource="EMBL-CDS" id="AAN28819"/>
    </conflict>
    <text>Truncated C-terminus.</text>
</comment>
<dbReference type="EC" id="2.3.1.92" evidence="3 7"/>
<dbReference type="EC" id="2.3.1.103" evidence="3 7"/>
<dbReference type="EMBL" id="AF275313">
    <property type="protein sequence ID" value="AAF78760.1"/>
    <property type="molecule type" value="mRNA"/>
</dbReference>
<dbReference type="EMBL" id="AC004401">
    <property type="protein sequence ID" value="AAC17816.2"/>
    <property type="status" value="ALT_SEQ"/>
    <property type="molecule type" value="Genomic_DNA"/>
</dbReference>
<dbReference type="EMBL" id="AC004786">
    <property type="protein sequence ID" value="AAM15006.1"/>
    <property type="status" value="ALT_SEQ"/>
    <property type="molecule type" value="Genomic_DNA"/>
</dbReference>
<dbReference type="EMBL" id="CP002685">
    <property type="protein sequence ID" value="AEC07390.1"/>
    <property type="molecule type" value="Genomic_DNA"/>
</dbReference>
<dbReference type="EMBL" id="CP002685">
    <property type="protein sequence ID" value="AEC07393.1"/>
    <property type="molecule type" value="Genomic_DNA"/>
</dbReference>
<dbReference type="EMBL" id="AF361601">
    <property type="protein sequence ID" value="AAK32769.1"/>
    <property type="status" value="ALT_FRAME"/>
    <property type="molecule type" value="mRNA"/>
</dbReference>
<dbReference type="EMBL" id="AY035052">
    <property type="protein sequence ID" value="AAK59557.1"/>
    <property type="molecule type" value="mRNA"/>
</dbReference>
<dbReference type="EMBL" id="AY051060">
    <property type="protein sequence ID" value="AAK93737.1"/>
    <property type="molecule type" value="mRNA"/>
</dbReference>
<dbReference type="EMBL" id="AY143880">
    <property type="protein sequence ID" value="AAN28819.1"/>
    <property type="status" value="ALT_SEQ"/>
    <property type="molecule type" value="mRNA"/>
</dbReference>
<dbReference type="PIR" id="C84619">
    <property type="entry name" value="C84619"/>
</dbReference>
<dbReference type="RefSeq" id="NP_850034.1">
    <molecule id="Q8RUW5-1"/>
    <property type="nucleotide sequence ID" value="NM_179703.2"/>
</dbReference>
<dbReference type="RefSeq" id="NP_850035.1">
    <molecule id="Q8RUW5-2"/>
    <property type="nucleotide sequence ID" value="NM_179704.1"/>
</dbReference>
<dbReference type="SMR" id="Q8RUW5"/>
<dbReference type="FunCoup" id="Q8RUW5">
    <property type="interactions" value="1851"/>
</dbReference>
<dbReference type="STRING" id="3702.Q8RUW5"/>
<dbReference type="ESTHER" id="arath-SCP8">
    <property type="family name" value="Carboxypeptidase_S10"/>
</dbReference>
<dbReference type="MEROPS" id="S10.A14"/>
<dbReference type="GlyCosmos" id="Q8RUW5">
    <property type="glycosylation" value="5 sites, No reported glycans"/>
</dbReference>
<dbReference type="GlyGen" id="Q8RUW5">
    <property type="glycosylation" value="5 sites"/>
</dbReference>
<dbReference type="PaxDb" id="3702-AT2G22990.3"/>
<dbReference type="EnsemblPlants" id="AT2G22990.1">
    <molecule id="Q8RUW5-1"/>
    <property type="protein sequence ID" value="AT2G22990.1"/>
    <property type="gene ID" value="AT2G22990"/>
</dbReference>
<dbReference type="EnsemblPlants" id="AT2G22990.3">
    <molecule id="Q8RUW5-2"/>
    <property type="protein sequence ID" value="AT2G22990.3"/>
    <property type="gene ID" value="AT2G22990"/>
</dbReference>
<dbReference type="GeneID" id="816830"/>
<dbReference type="Gramene" id="AT2G22990.1">
    <molecule id="Q8RUW5-1"/>
    <property type="protein sequence ID" value="AT2G22990.1"/>
    <property type="gene ID" value="AT2G22990"/>
</dbReference>
<dbReference type="Gramene" id="AT2G22990.3">
    <molecule id="Q8RUW5-2"/>
    <property type="protein sequence ID" value="AT2G22990.3"/>
    <property type="gene ID" value="AT2G22990"/>
</dbReference>
<dbReference type="KEGG" id="ath:AT2G22990"/>
<dbReference type="Araport" id="AT2G22990"/>
<dbReference type="TAIR" id="AT2G22990">
    <property type="gene designation" value="SNG1"/>
</dbReference>
<dbReference type="eggNOG" id="KOG1282">
    <property type="taxonomic scope" value="Eukaryota"/>
</dbReference>
<dbReference type="HOGENOM" id="CLU_008523_0_1_1"/>
<dbReference type="InParanoid" id="Q8RUW5"/>
<dbReference type="OrthoDB" id="443318at2759"/>
<dbReference type="PhylomeDB" id="Q8RUW5"/>
<dbReference type="BioCyc" id="ARA:AT2G22990-MONOMER"/>
<dbReference type="BRENDA" id="2.3.1.92">
    <property type="organism ID" value="399"/>
</dbReference>
<dbReference type="PRO" id="PR:Q8RUW5"/>
<dbReference type="Proteomes" id="UP000006548">
    <property type="component" value="Chromosome 2"/>
</dbReference>
<dbReference type="ExpressionAtlas" id="Q8RUW5">
    <property type="expression patterns" value="baseline and differential"/>
</dbReference>
<dbReference type="GO" id="GO:0099503">
    <property type="term" value="C:secretory vesicle"/>
    <property type="evidence" value="ECO:0007005"/>
    <property type="project" value="TAIR"/>
</dbReference>
<dbReference type="GO" id="GO:0005773">
    <property type="term" value="C:vacuole"/>
    <property type="evidence" value="ECO:0007005"/>
    <property type="project" value="TAIR"/>
</dbReference>
<dbReference type="GO" id="GO:0004185">
    <property type="term" value="F:serine-type carboxypeptidase activity"/>
    <property type="evidence" value="ECO:0007669"/>
    <property type="project" value="InterPro"/>
</dbReference>
<dbReference type="GO" id="GO:0016754">
    <property type="term" value="F:sinapoylglucose-malate O-sinapoyltransferase activity"/>
    <property type="evidence" value="ECO:0000314"/>
    <property type="project" value="TAIR"/>
</dbReference>
<dbReference type="GO" id="GO:0047158">
    <property type="term" value="F:sinapoylglucose-sinapoylglucose O-sinapoyltransferase activity"/>
    <property type="evidence" value="ECO:0007669"/>
    <property type="project" value="UniProtKB-EC"/>
</dbReference>
<dbReference type="GO" id="GO:0009698">
    <property type="term" value="P:phenylpropanoid metabolic process"/>
    <property type="evidence" value="ECO:0000314"/>
    <property type="project" value="TAIR"/>
</dbReference>
<dbReference type="GO" id="GO:0006508">
    <property type="term" value="P:proteolysis"/>
    <property type="evidence" value="ECO:0007669"/>
    <property type="project" value="InterPro"/>
</dbReference>
<dbReference type="FunFam" id="3.40.50.1820:FF:000148">
    <property type="entry name" value="Serine carboxypeptidase-like 11"/>
    <property type="match status" value="1"/>
</dbReference>
<dbReference type="Gene3D" id="3.40.50.1820">
    <property type="entry name" value="alpha/beta hydrolase"/>
    <property type="match status" value="1"/>
</dbReference>
<dbReference type="InterPro" id="IPR029058">
    <property type="entry name" value="AB_hydrolase_fold"/>
</dbReference>
<dbReference type="InterPro" id="IPR001563">
    <property type="entry name" value="Peptidase_S10"/>
</dbReference>
<dbReference type="PANTHER" id="PTHR11802:SF196">
    <property type="entry name" value="SERINE CARBOXYPEPTIDASE-LIKE 10-RELATED"/>
    <property type="match status" value="1"/>
</dbReference>
<dbReference type="PANTHER" id="PTHR11802">
    <property type="entry name" value="SERINE PROTEASE FAMILY S10 SERINE CARBOXYPEPTIDASE"/>
    <property type="match status" value="1"/>
</dbReference>
<dbReference type="Pfam" id="PF00450">
    <property type="entry name" value="Peptidase_S10"/>
    <property type="match status" value="1"/>
</dbReference>
<dbReference type="PRINTS" id="PR00724">
    <property type="entry name" value="CRBOXYPTASEC"/>
</dbReference>
<dbReference type="SUPFAM" id="SSF53474">
    <property type="entry name" value="alpha/beta-Hydrolases"/>
    <property type="match status" value="1"/>
</dbReference>
<keyword id="KW-0012">Acyltransferase</keyword>
<keyword id="KW-0025">Alternative splicing</keyword>
<keyword id="KW-0903">Direct protein sequencing</keyword>
<keyword id="KW-1015">Disulfide bond</keyword>
<keyword id="KW-0325">Glycoprotein</keyword>
<keyword id="KW-1185">Reference proteome</keyword>
<keyword id="KW-0732">Signal</keyword>
<keyword id="KW-0808">Transferase</keyword>
<keyword id="KW-0926">Vacuole</keyword>
<protein>
    <recommendedName>
        <fullName evidence="12">Serine carboxypeptidase-like 8</fullName>
    </recommendedName>
    <alternativeName>
        <fullName evidence="10">Protein SINAPOYLGLUCOSE ACCUMULATOR 1</fullName>
    </alternativeName>
    <alternativeName>
        <fullName evidence="11 13">Sinapoylglucose--malate O-sinapoyltransferase</fullName>
        <shortName evidence="11">SMT</shortName>
        <ecNumber evidence="3 7">2.3.1.92</ecNumber>
    </alternativeName>
    <alternativeName>
        <fullName evidence="13">Sinapoylglucose--sinapoylglucose O-sinapoyltransferase</fullName>
        <ecNumber evidence="3 7">2.3.1.103</ecNumber>
    </alternativeName>
</protein>
<name>SCP8_ARATH</name>